<evidence type="ECO:0000255" key="1">
    <source>
        <dbReference type="HAMAP-Rule" id="MF_00071"/>
    </source>
</evidence>
<comment type="function">
    <text evidence="1">Required for accurate and efficient protein synthesis under certain stress conditions. May act as a fidelity factor of the translation reaction, by catalyzing a one-codon backward translocation of tRNAs on improperly translocated ribosomes. Back-translocation proceeds from a post-translocation (POST) complex to a pre-translocation (PRE) complex, thus giving elongation factor G a second chance to translocate the tRNAs correctly. Binds to ribosomes in a GTP-dependent manner.</text>
</comment>
<comment type="catalytic activity">
    <reaction evidence="1">
        <text>GTP + H2O = GDP + phosphate + H(+)</text>
        <dbReference type="Rhea" id="RHEA:19669"/>
        <dbReference type="ChEBI" id="CHEBI:15377"/>
        <dbReference type="ChEBI" id="CHEBI:15378"/>
        <dbReference type="ChEBI" id="CHEBI:37565"/>
        <dbReference type="ChEBI" id="CHEBI:43474"/>
        <dbReference type="ChEBI" id="CHEBI:58189"/>
        <dbReference type="EC" id="3.6.5.n1"/>
    </reaction>
</comment>
<comment type="subcellular location">
    <subcellularLocation>
        <location evidence="1">Cell inner membrane</location>
        <topology evidence="1">Peripheral membrane protein</topology>
        <orientation evidence="1">Cytoplasmic side</orientation>
    </subcellularLocation>
</comment>
<comment type="similarity">
    <text evidence="1">Belongs to the TRAFAC class translation factor GTPase superfamily. Classic translation factor GTPase family. LepA subfamily.</text>
</comment>
<proteinExistence type="inferred from homology"/>
<protein>
    <recommendedName>
        <fullName evidence="1">Elongation factor 4</fullName>
        <shortName evidence="1">EF-4</shortName>
        <ecNumber evidence="1">3.6.5.n1</ecNumber>
    </recommendedName>
    <alternativeName>
        <fullName evidence="1">Ribosomal back-translocase LepA</fullName>
    </alternativeName>
</protein>
<name>LEPA_ZYMMO</name>
<sequence length="602" mass="66715">MTPLDHIRNFSIIAHIDHGKSTLADRLIQTTGGLTAREMSEQVLDNMDIEKERGITIKAQTVRLDYTAKDGQKYVLNLMDTPGHVDFAYEVSRSLAACEGALLVVDASQGVEAQTLANVYQSIEYDHEIVPVINKIDLPAAEPEKVKQEIEEIIGLPADDAVLASAKSGIGIDDILEALVKRIPAPKGDINAPLKAMLVDSWYDPYLGVVILVRIIDGSLKKGQQIRFMQAGTTHLIDRVGCFRPKIEILDSLGPGEIGFITAQIKEVSQTAVGDTITDAKNPTSTPLPGFKQVQPVVFCGLFPVDAADFDKLKESLGKLRLNDASFSFEAENSAALGFGFRCGFLGLLHLEIIQERLSREYDLDLITTAPSVVYHLNMTHGEGSIDLHNPADMPDVTRIDSIDEPWIEATIYVPDQYLGAVLKLCQDRRGIQKDMTYVGGRVQLLYELPLNEVVFDFYDRLKSISRGYASFDYHQIGYREGDLVKMTIMVNGEVVDALSMIVHRHAAEGRGRQMCQRMKDLIPRHLFKIPIQAAIGGKVIARETIGAMRKDVTAKCYGGDISRKKKLLEKQKEGKKRMRQYGSVDIPQEAFIAALRMGDDS</sequence>
<accession>Q5NLP5</accession>
<gene>
    <name evidence="1" type="primary">lepA</name>
    <name type="ordered locus">ZMO1741</name>
</gene>
<keyword id="KW-0997">Cell inner membrane</keyword>
<keyword id="KW-1003">Cell membrane</keyword>
<keyword id="KW-0342">GTP-binding</keyword>
<keyword id="KW-0378">Hydrolase</keyword>
<keyword id="KW-0472">Membrane</keyword>
<keyword id="KW-0547">Nucleotide-binding</keyword>
<keyword id="KW-0648">Protein biosynthesis</keyword>
<keyword id="KW-1185">Reference proteome</keyword>
<dbReference type="EC" id="3.6.5.n1" evidence="1"/>
<dbReference type="EMBL" id="AE008692">
    <property type="protein sequence ID" value="AAV90365.1"/>
    <property type="molecule type" value="Genomic_DNA"/>
</dbReference>
<dbReference type="RefSeq" id="WP_011241484.1">
    <property type="nucleotide sequence ID" value="NZ_CP035711.1"/>
</dbReference>
<dbReference type="SMR" id="Q5NLP5"/>
<dbReference type="STRING" id="264203.ZMO1741"/>
<dbReference type="KEGG" id="zmo:ZMO1741"/>
<dbReference type="eggNOG" id="COG0481">
    <property type="taxonomic scope" value="Bacteria"/>
</dbReference>
<dbReference type="HOGENOM" id="CLU_009995_3_3_5"/>
<dbReference type="Proteomes" id="UP000001173">
    <property type="component" value="Chromosome"/>
</dbReference>
<dbReference type="GO" id="GO:0005886">
    <property type="term" value="C:plasma membrane"/>
    <property type="evidence" value="ECO:0007669"/>
    <property type="project" value="UniProtKB-SubCell"/>
</dbReference>
<dbReference type="GO" id="GO:0005525">
    <property type="term" value="F:GTP binding"/>
    <property type="evidence" value="ECO:0007669"/>
    <property type="project" value="UniProtKB-UniRule"/>
</dbReference>
<dbReference type="GO" id="GO:0003924">
    <property type="term" value="F:GTPase activity"/>
    <property type="evidence" value="ECO:0007669"/>
    <property type="project" value="UniProtKB-UniRule"/>
</dbReference>
<dbReference type="GO" id="GO:0097216">
    <property type="term" value="F:guanosine tetraphosphate binding"/>
    <property type="evidence" value="ECO:0007669"/>
    <property type="project" value="UniProtKB-ARBA"/>
</dbReference>
<dbReference type="GO" id="GO:0043022">
    <property type="term" value="F:ribosome binding"/>
    <property type="evidence" value="ECO:0007669"/>
    <property type="project" value="UniProtKB-UniRule"/>
</dbReference>
<dbReference type="GO" id="GO:0003746">
    <property type="term" value="F:translation elongation factor activity"/>
    <property type="evidence" value="ECO:0007669"/>
    <property type="project" value="UniProtKB-UniRule"/>
</dbReference>
<dbReference type="GO" id="GO:0045727">
    <property type="term" value="P:positive regulation of translation"/>
    <property type="evidence" value="ECO:0007669"/>
    <property type="project" value="UniProtKB-UniRule"/>
</dbReference>
<dbReference type="CDD" id="cd03699">
    <property type="entry name" value="EF4_II"/>
    <property type="match status" value="1"/>
</dbReference>
<dbReference type="CDD" id="cd16260">
    <property type="entry name" value="EF4_III"/>
    <property type="match status" value="1"/>
</dbReference>
<dbReference type="CDD" id="cd01890">
    <property type="entry name" value="LepA"/>
    <property type="match status" value="1"/>
</dbReference>
<dbReference type="CDD" id="cd03709">
    <property type="entry name" value="lepA_C"/>
    <property type="match status" value="1"/>
</dbReference>
<dbReference type="FunFam" id="3.40.50.300:FF:000078">
    <property type="entry name" value="Elongation factor 4"/>
    <property type="match status" value="1"/>
</dbReference>
<dbReference type="FunFam" id="2.40.30.10:FF:000015">
    <property type="entry name" value="Translation factor GUF1, mitochondrial"/>
    <property type="match status" value="1"/>
</dbReference>
<dbReference type="FunFam" id="3.30.70.240:FF:000007">
    <property type="entry name" value="Translation factor GUF1, mitochondrial"/>
    <property type="match status" value="1"/>
</dbReference>
<dbReference type="FunFam" id="3.30.70.2570:FF:000001">
    <property type="entry name" value="Translation factor GUF1, mitochondrial"/>
    <property type="match status" value="1"/>
</dbReference>
<dbReference type="FunFam" id="3.30.70.870:FF:000004">
    <property type="entry name" value="Translation factor GUF1, mitochondrial"/>
    <property type="match status" value="1"/>
</dbReference>
<dbReference type="Gene3D" id="3.30.70.240">
    <property type="match status" value="1"/>
</dbReference>
<dbReference type="Gene3D" id="3.30.70.2570">
    <property type="entry name" value="Elongation factor 4, C-terminal domain"/>
    <property type="match status" value="1"/>
</dbReference>
<dbReference type="Gene3D" id="3.30.70.870">
    <property type="entry name" value="Elongation Factor G (Translational Gtpase), domain 3"/>
    <property type="match status" value="1"/>
</dbReference>
<dbReference type="Gene3D" id="3.40.50.300">
    <property type="entry name" value="P-loop containing nucleotide triphosphate hydrolases"/>
    <property type="match status" value="1"/>
</dbReference>
<dbReference type="Gene3D" id="2.40.30.10">
    <property type="entry name" value="Translation factors"/>
    <property type="match status" value="1"/>
</dbReference>
<dbReference type="HAMAP" id="MF_00071">
    <property type="entry name" value="LepA"/>
    <property type="match status" value="1"/>
</dbReference>
<dbReference type="InterPro" id="IPR006297">
    <property type="entry name" value="EF-4"/>
</dbReference>
<dbReference type="InterPro" id="IPR035647">
    <property type="entry name" value="EFG_III/V"/>
</dbReference>
<dbReference type="InterPro" id="IPR000640">
    <property type="entry name" value="EFG_V-like"/>
</dbReference>
<dbReference type="InterPro" id="IPR004161">
    <property type="entry name" value="EFTu-like_2"/>
</dbReference>
<dbReference type="InterPro" id="IPR031157">
    <property type="entry name" value="G_TR_CS"/>
</dbReference>
<dbReference type="InterPro" id="IPR038363">
    <property type="entry name" value="LepA_C_sf"/>
</dbReference>
<dbReference type="InterPro" id="IPR013842">
    <property type="entry name" value="LepA_CTD"/>
</dbReference>
<dbReference type="InterPro" id="IPR035654">
    <property type="entry name" value="LepA_IV"/>
</dbReference>
<dbReference type="InterPro" id="IPR027417">
    <property type="entry name" value="P-loop_NTPase"/>
</dbReference>
<dbReference type="InterPro" id="IPR005225">
    <property type="entry name" value="Small_GTP-bd"/>
</dbReference>
<dbReference type="InterPro" id="IPR000795">
    <property type="entry name" value="T_Tr_GTP-bd_dom"/>
</dbReference>
<dbReference type="NCBIfam" id="TIGR01393">
    <property type="entry name" value="lepA"/>
    <property type="match status" value="1"/>
</dbReference>
<dbReference type="NCBIfam" id="TIGR00231">
    <property type="entry name" value="small_GTP"/>
    <property type="match status" value="1"/>
</dbReference>
<dbReference type="PANTHER" id="PTHR43512:SF4">
    <property type="entry name" value="TRANSLATION FACTOR GUF1 HOMOLOG, CHLOROPLASTIC"/>
    <property type="match status" value="1"/>
</dbReference>
<dbReference type="PANTHER" id="PTHR43512">
    <property type="entry name" value="TRANSLATION FACTOR GUF1-RELATED"/>
    <property type="match status" value="1"/>
</dbReference>
<dbReference type="Pfam" id="PF00679">
    <property type="entry name" value="EFG_C"/>
    <property type="match status" value="1"/>
</dbReference>
<dbReference type="Pfam" id="PF00009">
    <property type="entry name" value="GTP_EFTU"/>
    <property type="match status" value="1"/>
</dbReference>
<dbReference type="Pfam" id="PF03144">
    <property type="entry name" value="GTP_EFTU_D2"/>
    <property type="match status" value="1"/>
</dbReference>
<dbReference type="Pfam" id="PF06421">
    <property type="entry name" value="LepA_C"/>
    <property type="match status" value="1"/>
</dbReference>
<dbReference type="PRINTS" id="PR00315">
    <property type="entry name" value="ELONGATNFCT"/>
</dbReference>
<dbReference type="SMART" id="SM00838">
    <property type="entry name" value="EFG_C"/>
    <property type="match status" value="1"/>
</dbReference>
<dbReference type="SUPFAM" id="SSF54980">
    <property type="entry name" value="EF-G C-terminal domain-like"/>
    <property type="match status" value="2"/>
</dbReference>
<dbReference type="SUPFAM" id="SSF52540">
    <property type="entry name" value="P-loop containing nucleoside triphosphate hydrolases"/>
    <property type="match status" value="1"/>
</dbReference>
<dbReference type="PROSITE" id="PS00301">
    <property type="entry name" value="G_TR_1"/>
    <property type="match status" value="1"/>
</dbReference>
<dbReference type="PROSITE" id="PS51722">
    <property type="entry name" value="G_TR_2"/>
    <property type="match status" value="1"/>
</dbReference>
<organism>
    <name type="scientific">Zymomonas mobilis subsp. mobilis (strain ATCC 31821 / ZM4 / CP4)</name>
    <dbReference type="NCBI Taxonomy" id="264203"/>
    <lineage>
        <taxon>Bacteria</taxon>
        <taxon>Pseudomonadati</taxon>
        <taxon>Pseudomonadota</taxon>
        <taxon>Alphaproteobacteria</taxon>
        <taxon>Sphingomonadales</taxon>
        <taxon>Zymomonadaceae</taxon>
        <taxon>Zymomonas</taxon>
    </lineage>
</organism>
<reference key="1">
    <citation type="journal article" date="2005" name="Nat. Biotechnol.">
        <title>The genome sequence of the ethanologenic bacterium Zymomonas mobilis ZM4.</title>
        <authorList>
            <person name="Seo J.-S."/>
            <person name="Chong H."/>
            <person name="Park H.S."/>
            <person name="Yoon K.-O."/>
            <person name="Jung C."/>
            <person name="Kim J.J."/>
            <person name="Hong J.H."/>
            <person name="Kim H."/>
            <person name="Kim J.-H."/>
            <person name="Kil J.-I."/>
            <person name="Park C.J."/>
            <person name="Oh H.-M."/>
            <person name="Lee J.-S."/>
            <person name="Jin S.-J."/>
            <person name="Um H.-W."/>
            <person name="Lee H.-J."/>
            <person name="Oh S.-J."/>
            <person name="Kim J.Y."/>
            <person name="Kang H.L."/>
            <person name="Lee S.Y."/>
            <person name="Lee K.J."/>
            <person name="Kang H.S."/>
        </authorList>
    </citation>
    <scope>NUCLEOTIDE SEQUENCE [LARGE SCALE GENOMIC DNA]</scope>
    <source>
        <strain>ATCC 31821 / ZM4 / CP4</strain>
    </source>
</reference>
<feature type="chain" id="PRO_0000224813" description="Elongation factor 4">
    <location>
        <begin position="1"/>
        <end position="602"/>
    </location>
</feature>
<feature type="domain" description="tr-type G">
    <location>
        <begin position="5"/>
        <end position="187"/>
    </location>
</feature>
<feature type="binding site" evidence="1">
    <location>
        <begin position="17"/>
        <end position="22"/>
    </location>
    <ligand>
        <name>GTP</name>
        <dbReference type="ChEBI" id="CHEBI:37565"/>
    </ligand>
</feature>
<feature type="binding site" evidence="1">
    <location>
        <begin position="134"/>
        <end position="137"/>
    </location>
    <ligand>
        <name>GTP</name>
        <dbReference type="ChEBI" id="CHEBI:37565"/>
    </ligand>
</feature>